<evidence type="ECO:0000255" key="1">
    <source>
        <dbReference type="HAMAP-Rule" id="MF_00599"/>
    </source>
</evidence>
<protein>
    <recommendedName>
        <fullName evidence="1">Cell division protein FtsB</fullName>
    </recommendedName>
</protein>
<comment type="function">
    <text evidence="1">Essential cell division protein. May link together the upstream cell division proteins, which are predominantly cytoplasmic, with the downstream cell division proteins, which are predominantly periplasmic.</text>
</comment>
<comment type="subunit">
    <text evidence="1">Part of a complex composed of FtsB, FtsL and FtsQ.</text>
</comment>
<comment type="subcellular location">
    <subcellularLocation>
        <location evidence="1">Cell inner membrane</location>
        <topology evidence="1">Single-pass type II membrane protein</topology>
    </subcellularLocation>
    <text evidence="1">Localizes to the division septum.</text>
</comment>
<comment type="similarity">
    <text evidence="1">Belongs to the FtsB family.</text>
</comment>
<organism>
    <name type="scientific">Neisseria gonorrhoeae (strain NCCP11945)</name>
    <dbReference type="NCBI Taxonomy" id="521006"/>
    <lineage>
        <taxon>Bacteria</taxon>
        <taxon>Pseudomonadati</taxon>
        <taxon>Pseudomonadota</taxon>
        <taxon>Betaproteobacteria</taxon>
        <taxon>Neisseriales</taxon>
        <taxon>Neisseriaceae</taxon>
        <taxon>Neisseria</taxon>
    </lineage>
</organism>
<name>FTSB_NEIG2</name>
<reference key="1">
    <citation type="journal article" date="2008" name="J. Bacteriol.">
        <title>Complete genome sequence of Neisseria gonorrhoeae NCCP11945.</title>
        <authorList>
            <person name="Chung G.T."/>
            <person name="Yoo J.S."/>
            <person name="Oh H.B."/>
            <person name="Lee Y.S."/>
            <person name="Cha S.H."/>
            <person name="Kim S.J."/>
            <person name="Yoo C.K."/>
        </authorList>
    </citation>
    <scope>NUCLEOTIDE SEQUENCE [LARGE SCALE GENOMIC DNA]</scope>
    <source>
        <strain>NCCP11945</strain>
    </source>
</reference>
<accession>B4RMD9</accession>
<sequence>MKWVTVVLSFALVCCQYSLWFGKGSIGRNSSLREQIAVQEEKNQTLALRNHSLAAEVYDLENGQEAISEIARVELGYIQDGETFYRLIRHNR</sequence>
<keyword id="KW-0131">Cell cycle</keyword>
<keyword id="KW-0132">Cell division</keyword>
<keyword id="KW-0997">Cell inner membrane</keyword>
<keyword id="KW-1003">Cell membrane</keyword>
<keyword id="KW-0175">Coiled coil</keyword>
<keyword id="KW-0472">Membrane</keyword>
<keyword id="KW-0812">Transmembrane</keyword>
<keyword id="KW-1133">Transmembrane helix</keyword>
<dbReference type="EMBL" id="CP001050">
    <property type="protein sequence ID" value="ACF29974.1"/>
    <property type="molecule type" value="Genomic_DNA"/>
</dbReference>
<dbReference type="RefSeq" id="WP_002213385.1">
    <property type="nucleotide sequence ID" value="NC_011035.1"/>
</dbReference>
<dbReference type="SMR" id="B4RMD9"/>
<dbReference type="GeneID" id="93385912"/>
<dbReference type="KEGG" id="ngk:NGK_1299"/>
<dbReference type="HOGENOM" id="CLU_134863_5_2_4"/>
<dbReference type="Proteomes" id="UP000002564">
    <property type="component" value="Chromosome"/>
</dbReference>
<dbReference type="GO" id="GO:0032153">
    <property type="term" value="C:cell division site"/>
    <property type="evidence" value="ECO:0007669"/>
    <property type="project" value="UniProtKB-UniRule"/>
</dbReference>
<dbReference type="GO" id="GO:0030428">
    <property type="term" value="C:cell septum"/>
    <property type="evidence" value="ECO:0007669"/>
    <property type="project" value="TreeGrafter"/>
</dbReference>
<dbReference type="GO" id="GO:0005886">
    <property type="term" value="C:plasma membrane"/>
    <property type="evidence" value="ECO:0007669"/>
    <property type="project" value="UniProtKB-SubCell"/>
</dbReference>
<dbReference type="GO" id="GO:0043093">
    <property type="term" value="P:FtsZ-dependent cytokinesis"/>
    <property type="evidence" value="ECO:0007669"/>
    <property type="project" value="UniProtKB-UniRule"/>
</dbReference>
<dbReference type="HAMAP" id="MF_00599">
    <property type="entry name" value="FtsB"/>
    <property type="match status" value="1"/>
</dbReference>
<dbReference type="InterPro" id="IPR023081">
    <property type="entry name" value="Cell_div_FtsB"/>
</dbReference>
<dbReference type="InterPro" id="IPR007060">
    <property type="entry name" value="FtsL/DivIC"/>
</dbReference>
<dbReference type="NCBIfam" id="NF002058">
    <property type="entry name" value="PRK00888.1"/>
    <property type="match status" value="1"/>
</dbReference>
<dbReference type="PANTHER" id="PTHR37485">
    <property type="entry name" value="CELL DIVISION PROTEIN FTSB"/>
    <property type="match status" value="1"/>
</dbReference>
<dbReference type="PANTHER" id="PTHR37485:SF1">
    <property type="entry name" value="CELL DIVISION PROTEIN FTSB"/>
    <property type="match status" value="1"/>
</dbReference>
<dbReference type="Pfam" id="PF04977">
    <property type="entry name" value="DivIC"/>
    <property type="match status" value="1"/>
</dbReference>
<gene>
    <name evidence="1" type="primary">ftsB</name>
    <name type="ordered locus">NGK_1299</name>
</gene>
<feature type="chain" id="PRO_1000129934" description="Cell division protein FtsB">
    <location>
        <begin position="1"/>
        <end position="92"/>
    </location>
</feature>
<feature type="topological domain" description="Cytoplasmic" evidence="1">
    <location>
        <begin position="1"/>
        <end position="3"/>
    </location>
</feature>
<feature type="transmembrane region" description="Helical" evidence="1">
    <location>
        <begin position="4"/>
        <end position="21"/>
    </location>
</feature>
<feature type="topological domain" description="Periplasmic" evidence="1">
    <location>
        <begin position="22"/>
        <end position="92"/>
    </location>
</feature>
<feature type="coiled-coil region" evidence="1">
    <location>
        <begin position="28"/>
        <end position="50"/>
    </location>
</feature>
<proteinExistence type="inferred from homology"/>